<proteinExistence type="inferred from homology"/>
<reference key="1">
    <citation type="submission" date="2007-06" db="EMBL/GenBank/DDBJ databases">
        <title>Complete sequence of Methanococcus maripaludis C7.</title>
        <authorList>
            <consortium name="US DOE Joint Genome Institute"/>
            <person name="Copeland A."/>
            <person name="Lucas S."/>
            <person name="Lapidus A."/>
            <person name="Barry K."/>
            <person name="Glavina del Rio T."/>
            <person name="Dalin E."/>
            <person name="Tice H."/>
            <person name="Pitluck S."/>
            <person name="Clum A."/>
            <person name="Schmutz J."/>
            <person name="Larimer F."/>
            <person name="Land M."/>
            <person name="Hauser L."/>
            <person name="Kyrpides N."/>
            <person name="Anderson I."/>
            <person name="Sieprawska-Lupa M."/>
            <person name="Whitman W.B."/>
            <person name="Richardson P."/>
        </authorList>
    </citation>
    <scope>NUCLEOTIDE SEQUENCE [LARGE SCALE GENOMIC DNA]</scope>
    <source>
        <strain>C7 / ATCC BAA-1331</strain>
    </source>
</reference>
<feature type="chain" id="PRO_0000323516" description="5-amino-6-(D-ribitylamino)uracil--L-tyrosine 4-hydroxyphenyl transferase">
    <location>
        <begin position="1"/>
        <end position="359"/>
    </location>
</feature>
<feature type="domain" description="Radical SAM core" evidence="2">
    <location>
        <begin position="45"/>
        <end position="282"/>
    </location>
</feature>
<feature type="binding site" evidence="1">
    <location>
        <position position="59"/>
    </location>
    <ligand>
        <name>[4Fe-4S] cluster</name>
        <dbReference type="ChEBI" id="CHEBI:49883"/>
        <note>4Fe-4S-S-AdoMet</note>
    </ligand>
</feature>
<feature type="binding site" evidence="1">
    <location>
        <position position="63"/>
    </location>
    <ligand>
        <name>[4Fe-4S] cluster</name>
        <dbReference type="ChEBI" id="CHEBI:49883"/>
        <note>4Fe-4S-S-AdoMet</note>
    </ligand>
</feature>
<feature type="binding site" evidence="1">
    <location>
        <position position="66"/>
    </location>
    <ligand>
        <name>[4Fe-4S] cluster</name>
        <dbReference type="ChEBI" id="CHEBI:49883"/>
        <note>4Fe-4S-S-AdoMet</note>
    </ligand>
</feature>
<dbReference type="EC" id="2.5.1.147" evidence="1"/>
<dbReference type="EMBL" id="CP000745">
    <property type="protein sequence ID" value="ABR66119.1"/>
    <property type="status" value="ALT_INIT"/>
    <property type="molecule type" value="Genomic_DNA"/>
</dbReference>
<dbReference type="SMR" id="A6VI43"/>
<dbReference type="STRING" id="426368.MmarC7_1053"/>
<dbReference type="KEGG" id="mmz:MmarC7_1053"/>
<dbReference type="eggNOG" id="arCOG00656">
    <property type="taxonomic scope" value="Archaea"/>
</dbReference>
<dbReference type="HOGENOM" id="CLU_040406_1_0_2"/>
<dbReference type="OrthoDB" id="8186at2157"/>
<dbReference type="UniPathway" id="UPA00072"/>
<dbReference type="GO" id="GO:0051539">
    <property type="term" value="F:4 iron, 4 sulfur cluster binding"/>
    <property type="evidence" value="ECO:0007669"/>
    <property type="project" value="UniProtKB-KW"/>
</dbReference>
<dbReference type="GO" id="GO:0141093">
    <property type="term" value="F:5-amino-6-(D-ribitylamino)uracil--L-tyrosine 4-hydroxyphenyl transferase activity"/>
    <property type="evidence" value="ECO:0007669"/>
    <property type="project" value="UniProtKB-EC"/>
</dbReference>
<dbReference type="GO" id="GO:0044689">
    <property type="term" value="F:7,8-didemethyl-8-hydroxy-5-deazariboflavin synthase activity"/>
    <property type="evidence" value="ECO:0007669"/>
    <property type="project" value="TreeGrafter"/>
</dbReference>
<dbReference type="GO" id="GO:0005506">
    <property type="term" value="F:iron ion binding"/>
    <property type="evidence" value="ECO:0007669"/>
    <property type="project" value="UniProtKB-UniRule"/>
</dbReference>
<dbReference type="CDD" id="cd01335">
    <property type="entry name" value="Radical_SAM"/>
    <property type="match status" value="1"/>
</dbReference>
<dbReference type="FunFam" id="3.20.20.70:FF:000134">
    <property type="entry name" value="7,8-didemethyl-8-hydroxy-5-deazariboflavin synthase"/>
    <property type="match status" value="1"/>
</dbReference>
<dbReference type="Gene3D" id="3.20.20.70">
    <property type="entry name" value="Aldolase class I"/>
    <property type="match status" value="1"/>
</dbReference>
<dbReference type="HAMAP" id="MF_01612">
    <property type="entry name" value="FO_synth_sub2"/>
    <property type="match status" value="1"/>
</dbReference>
<dbReference type="InterPro" id="IPR013785">
    <property type="entry name" value="Aldolase_TIM"/>
</dbReference>
<dbReference type="InterPro" id="IPR045567">
    <property type="entry name" value="CofH/MnqC-like_C"/>
</dbReference>
<dbReference type="InterPro" id="IPR019940">
    <property type="entry name" value="CofH_family"/>
</dbReference>
<dbReference type="InterPro" id="IPR006638">
    <property type="entry name" value="Elp3/MiaA/NifB-like_rSAM"/>
</dbReference>
<dbReference type="InterPro" id="IPR034405">
    <property type="entry name" value="F420"/>
</dbReference>
<dbReference type="InterPro" id="IPR020050">
    <property type="entry name" value="FO_synthase_su2"/>
</dbReference>
<dbReference type="InterPro" id="IPR007197">
    <property type="entry name" value="rSAM"/>
</dbReference>
<dbReference type="NCBIfam" id="TIGR00423">
    <property type="entry name" value="CofH family radical SAM protein"/>
    <property type="match status" value="1"/>
</dbReference>
<dbReference type="NCBIfam" id="TIGR03551">
    <property type="entry name" value="F420_cofH"/>
    <property type="match status" value="1"/>
</dbReference>
<dbReference type="NCBIfam" id="NF005609">
    <property type="entry name" value="PRK07360.1"/>
    <property type="match status" value="1"/>
</dbReference>
<dbReference type="PANTHER" id="PTHR43076">
    <property type="entry name" value="FO SYNTHASE (COFH)"/>
    <property type="match status" value="1"/>
</dbReference>
<dbReference type="PANTHER" id="PTHR43076:SF1">
    <property type="entry name" value="LIPOYL SYNTHASE 2"/>
    <property type="match status" value="1"/>
</dbReference>
<dbReference type="Pfam" id="PF19288">
    <property type="entry name" value="CofH_C"/>
    <property type="match status" value="1"/>
</dbReference>
<dbReference type="Pfam" id="PF04055">
    <property type="entry name" value="Radical_SAM"/>
    <property type="match status" value="1"/>
</dbReference>
<dbReference type="PIRSF" id="PIRSF004762">
    <property type="entry name" value="CHP00423"/>
    <property type="match status" value="1"/>
</dbReference>
<dbReference type="SFLD" id="SFLDF00293">
    <property type="entry name" value="((2_3_4_5-tetrahydroxypentyl)a"/>
    <property type="match status" value="1"/>
</dbReference>
<dbReference type="SFLD" id="SFLDF00343">
    <property type="entry name" value="aminofutalosine_synthase_(mqnE"/>
    <property type="match status" value="1"/>
</dbReference>
<dbReference type="SFLD" id="SFLDS00029">
    <property type="entry name" value="Radical_SAM"/>
    <property type="match status" value="1"/>
</dbReference>
<dbReference type="SMART" id="SM00729">
    <property type="entry name" value="Elp3"/>
    <property type="match status" value="1"/>
</dbReference>
<dbReference type="SUPFAM" id="SSF102114">
    <property type="entry name" value="Radical SAM enzymes"/>
    <property type="match status" value="1"/>
</dbReference>
<dbReference type="PROSITE" id="PS51918">
    <property type="entry name" value="RADICAL_SAM"/>
    <property type="match status" value="1"/>
</dbReference>
<keyword id="KW-0004">4Fe-4S</keyword>
<keyword id="KW-0408">Iron</keyword>
<keyword id="KW-0411">Iron-sulfur</keyword>
<keyword id="KW-0479">Metal-binding</keyword>
<keyword id="KW-0949">S-adenosyl-L-methionine</keyword>
<keyword id="KW-0808">Transferase</keyword>
<gene>
    <name evidence="1" type="primary">cofH</name>
    <name type="ordered locus">MmarC7_1053</name>
</gene>
<sequence length="359" mass="39785">MDFISFKEKEISKKECLELFENTENFFDVIKLADSLRKDIVGDAVTYVVNANINFTNICTGTCGFCAYKAEHGDPHAFFLNPDEVAKKALEARKIGATEVCIQGGLLKEIDTYFQAEILKKVKEITAPYGKIDVHAFSPMEVKSAAENAGLNVKEALKILKESGLNSMPGTAAEILNDEIRSEICPTKLKTSEWIDVVSNAHKTGIKTTCTMMYGHVEENDHLAEHLSILRNIQKETGGFTEFVPLTFLHENAPLYHTERVKSGASGMLDLKVYAISRIFFKDSIKNIQTSWVKLGTKLSQVSLNCGANDIGGTLMEENISKSAGGSYGTYMSEEQLKDMVLAVGRIPKQRNTAYEIIE</sequence>
<protein>
    <recommendedName>
        <fullName evidence="1">5-amino-6-(D-ribitylamino)uracil--L-tyrosine 4-hydroxyphenyl transferase</fullName>
        <ecNumber evidence="1">2.5.1.147</ecNumber>
    </recommendedName>
    <alternativeName>
        <fullName evidence="1">FO synthase subunit 2</fullName>
    </alternativeName>
</protein>
<evidence type="ECO:0000255" key="1">
    <source>
        <dbReference type="HAMAP-Rule" id="MF_01612"/>
    </source>
</evidence>
<evidence type="ECO:0000255" key="2">
    <source>
        <dbReference type="PROSITE-ProRule" id="PRU01266"/>
    </source>
</evidence>
<evidence type="ECO:0000305" key="3"/>
<name>COFH_METM7</name>
<comment type="function">
    <text evidence="1">Catalyzes the radical-mediated synthesis of 5-amino-5-(4-hydroxybenzyl)-6-(D-ribitylimino)-5,6-dihydrouracil from 5-amino-6-(D-ribitylamino)uracil and L-tyrosine.</text>
</comment>
<comment type="catalytic activity">
    <reaction evidence="1">
        <text>5-amino-6-(D-ribitylamino)uracil + L-tyrosine + S-adenosyl-L-methionine = 5-amino-5-(4-hydroxybenzyl)-6-(D-ribitylimino)-5,6-dihydrouracil + 2-iminoacetate + 5'-deoxyadenosine + L-methionine + H(+)</text>
        <dbReference type="Rhea" id="RHEA:55200"/>
        <dbReference type="ChEBI" id="CHEBI:15378"/>
        <dbReference type="ChEBI" id="CHEBI:15934"/>
        <dbReference type="ChEBI" id="CHEBI:17319"/>
        <dbReference type="ChEBI" id="CHEBI:57844"/>
        <dbReference type="ChEBI" id="CHEBI:58315"/>
        <dbReference type="ChEBI" id="CHEBI:59789"/>
        <dbReference type="ChEBI" id="CHEBI:77846"/>
        <dbReference type="ChEBI" id="CHEBI:85936"/>
        <dbReference type="EC" id="2.5.1.147"/>
    </reaction>
</comment>
<comment type="cofactor">
    <cofactor evidence="1">
        <name>[4Fe-4S] cluster</name>
        <dbReference type="ChEBI" id="CHEBI:49883"/>
    </cofactor>
    <text evidence="1">Binds 1 [4Fe-4S] cluster. The cluster is coordinated with 3 cysteines and an exchangeable S-adenosyl-L-methionine.</text>
</comment>
<comment type="pathway">
    <text evidence="1">Cofactor biosynthesis; coenzyme F0 biosynthesis.</text>
</comment>
<comment type="subunit">
    <text evidence="1">Consists of two subunits, CofG and CofH.</text>
</comment>
<comment type="similarity">
    <text evidence="1">Belongs to the radical SAM superfamily. CofH family.</text>
</comment>
<comment type="sequence caution" evidence="3">
    <conflict type="erroneous initiation">
        <sequence resource="EMBL-CDS" id="ABR66119"/>
    </conflict>
</comment>
<accession>A6VI43</accession>
<organism>
    <name type="scientific">Methanococcus maripaludis (strain C7 / ATCC BAA-1331)</name>
    <dbReference type="NCBI Taxonomy" id="426368"/>
    <lineage>
        <taxon>Archaea</taxon>
        <taxon>Methanobacteriati</taxon>
        <taxon>Methanobacteriota</taxon>
        <taxon>Methanomada group</taxon>
        <taxon>Methanococci</taxon>
        <taxon>Methanococcales</taxon>
        <taxon>Methanococcaceae</taxon>
        <taxon>Methanococcus</taxon>
    </lineage>
</organism>